<name>YEAQ_ECO57</name>
<evidence type="ECO:0000255" key="1"/>
<evidence type="ECO:0000305" key="2"/>
<organism>
    <name type="scientific">Escherichia coli O157:H7</name>
    <dbReference type="NCBI Taxonomy" id="83334"/>
    <lineage>
        <taxon>Bacteria</taxon>
        <taxon>Pseudomonadati</taxon>
        <taxon>Pseudomonadota</taxon>
        <taxon>Gammaproteobacteria</taxon>
        <taxon>Enterobacterales</taxon>
        <taxon>Enterobacteriaceae</taxon>
        <taxon>Escherichia</taxon>
    </lineage>
</organism>
<feature type="chain" id="PRO_0000169026" description="UPF0410 protein YeaQ">
    <location>
        <begin position="1"/>
        <end position="82"/>
    </location>
</feature>
<feature type="transmembrane region" description="Helical" evidence="1">
    <location>
        <begin position="26"/>
        <end position="46"/>
    </location>
</feature>
<feature type="transmembrane region" description="Helical" evidence="1">
    <location>
        <begin position="57"/>
        <end position="77"/>
    </location>
</feature>
<gene>
    <name type="primary">yeaQ</name>
    <name type="ordered locus">Z2837</name>
    <name type="ordered locus">ECs2504</name>
</gene>
<sequence>MGILSWIIFGLIAGILAKWIMPGKDGGGFFMTILLGIVGAVVGGWISTLFGFGKVDGFNFGSFVVAVIGAIVVLFIYRKIKS</sequence>
<comment type="subcellular location">
    <subcellularLocation>
        <location evidence="2">Cell inner membrane</location>
        <topology evidence="2">Multi-pass membrane protein</topology>
    </subcellularLocation>
</comment>
<comment type="similarity">
    <text evidence="2">Belongs to the UPF0410 family.</text>
</comment>
<reference key="1">
    <citation type="journal article" date="2001" name="Nature">
        <title>Genome sequence of enterohaemorrhagic Escherichia coli O157:H7.</title>
        <authorList>
            <person name="Perna N.T."/>
            <person name="Plunkett G. III"/>
            <person name="Burland V."/>
            <person name="Mau B."/>
            <person name="Glasner J.D."/>
            <person name="Rose D.J."/>
            <person name="Mayhew G.F."/>
            <person name="Evans P.S."/>
            <person name="Gregor J."/>
            <person name="Kirkpatrick H.A."/>
            <person name="Posfai G."/>
            <person name="Hackett J."/>
            <person name="Klink S."/>
            <person name="Boutin A."/>
            <person name="Shao Y."/>
            <person name="Miller L."/>
            <person name="Grotbeck E.J."/>
            <person name="Davis N.W."/>
            <person name="Lim A."/>
            <person name="Dimalanta E.T."/>
            <person name="Potamousis K."/>
            <person name="Apodaca J."/>
            <person name="Anantharaman T.S."/>
            <person name="Lin J."/>
            <person name="Yen G."/>
            <person name="Schwartz D.C."/>
            <person name="Welch R.A."/>
            <person name="Blattner F.R."/>
        </authorList>
    </citation>
    <scope>NUCLEOTIDE SEQUENCE [LARGE SCALE GENOMIC DNA]</scope>
    <source>
        <strain>O157:H7 / EDL933 / ATCC 700927 / EHEC</strain>
    </source>
</reference>
<reference key="2">
    <citation type="journal article" date="2001" name="DNA Res.">
        <title>Complete genome sequence of enterohemorrhagic Escherichia coli O157:H7 and genomic comparison with a laboratory strain K-12.</title>
        <authorList>
            <person name="Hayashi T."/>
            <person name="Makino K."/>
            <person name="Ohnishi M."/>
            <person name="Kurokawa K."/>
            <person name="Ishii K."/>
            <person name="Yokoyama K."/>
            <person name="Han C.-G."/>
            <person name="Ohtsubo E."/>
            <person name="Nakayama K."/>
            <person name="Murata T."/>
            <person name="Tanaka M."/>
            <person name="Tobe T."/>
            <person name="Iida T."/>
            <person name="Takami H."/>
            <person name="Honda T."/>
            <person name="Sasakawa C."/>
            <person name="Ogasawara N."/>
            <person name="Yasunaga T."/>
            <person name="Kuhara S."/>
            <person name="Shiba T."/>
            <person name="Hattori M."/>
            <person name="Shinagawa H."/>
        </authorList>
    </citation>
    <scope>NUCLEOTIDE SEQUENCE [LARGE SCALE GENOMIC DNA]</scope>
    <source>
        <strain>O157:H7 / Sakai / RIMD 0509952 / EHEC</strain>
    </source>
</reference>
<keyword id="KW-0997">Cell inner membrane</keyword>
<keyword id="KW-1003">Cell membrane</keyword>
<keyword id="KW-0472">Membrane</keyword>
<keyword id="KW-1185">Reference proteome</keyword>
<keyword id="KW-0812">Transmembrane</keyword>
<keyword id="KW-1133">Transmembrane helix</keyword>
<accession>P64487</accession>
<accession>P76246</accession>
<protein>
    <recommendedName>
        <fullName>UPF0410 protein YeaQ</fullName>
    </recommendedName>
</protein>
<proteinExistence type="inferred from homology"/>
<dbReference type="EMBL" id="AE005174">
    <property type="protein sequence ID" value="AAG56784.1"/>
    <property type="molecule type" value="Genomic_DNA"/>
</dbReference>
<dbReference type="EMBL" id="BA000007">
    <property type="protein sequence ID" value="BAB35927.1"/>
    <property type="molecule type" value="Genomic_DNA"/>
</dbReference>
<dbReference type="PIR" id="D85790">
    <property type="entry name" value="D85790"/>
</dbReference>
<dbReference type="PIR" id="H90941">
    <property type="entry name" value="H90941"/>
</dbReference>
<dbReference type="RefSeq" id="NP_310531.1">
    <property type="nucleotide sequence ID" value="NC_002695.1"/>
</dbReference>
<dbReference type="RefSeq" id="WP_000512153.1">
    <property type="nucleotide sequence ID" value="NZ_VOAI01000010.1"/>
</dbReference>
<dbReference type="SMR" id="P64487"/>
<dbReference type="STRING" id="155864.Z2837"/>
<dbReference type="GeneID" id="913024"/>
<dbReference type="KEGG" id="ece:Z2837"/>
<dbReference type="KEGG" id="ecs:ECs_2504"/>
<dbReference type="PATRIC" id="fig|386585.9.peg.2623"/>
<dbReference type="eggNOG" id="COG2261">
    <property type="taxonomic scope" value="Bacteria"/>
</dbReference>
<dbReference type="HOGENOM" id="CLU_160040_2_3_6"/>
<dbReference type="OMA" id="WIMTIVL"/>
<dbReference type="Proteomes" id="UP000000558">
    <property type="component" value="Chromosome"/>
</dbReference>
<dbReference type="Proteomes" id="UP000002519">
    <property type="component" value="Chromosome"/>
</dbReference>
<dbReference type="GO" id="GO:0005886">
    <property type="term" value="C:plasma membrane"/>
    <property type="evidence" value="ECO:0007669"/>
    <property type="project" value="UniProtKB-SubCell"/>
</dbReference>
<dbReference type="InterPro" id="IPR007341">
    <property type="entry name" value="Transgly_assoc"/>
</dbReference>
<dbReference type="NCBIfam" id="NF007771">
    <property type="entry name" value="PRK10457.1"/>
    <property type="match status" value="1"/>
</dbReference>
<dbReference type="PANTHER" id="PTHR33884:SF4">
    <property type="entry name" value="UPF0410 PROTEIN YEAQ"/>
    <property type="match status" value="1"/>
</dbReference>
<dbReference type="PANTHER" id="PTHR33884">
    <property type="entry name" value="UPF0410 PROTEIN YMGE"/>
    <property type="match status" value="1"/>
</dbReference>
<dbReference type="Pfam" id="PF04226">
    <property type="entry name" value="Transgly_assoc"/>
    <property type="match status" value="1"/>
</dbReference>